<proteinExistence type="inferred from homology"/>
<sequence length="525" mass="58956">MTENIHKHRILILDFGSQYTQLVARRVRELGVYCELWAWDVTEAQIREFNPSGIILSGGPESTTEENSPRAPEYVFEAGVPVFGVCYGMQTMAMQLGGHVEASNEREFGYAQVEVRTNSALIRGIEDSLTADGKPLLDVWMSHGDKVTAIPSDFVTVASTETCPFAIMANEEKRFYGVQFHPEVTHTRQGMRMLERFVRDICQCEALWTPAKIIDDAVNRIREQVGDDKVILGLSGGVDSSVTAMLLHRAIGKNLTCVFVDNGLLRLNEAEQVMDMFGDHFGLNIVHVPAEERFLTALKGENDPEAKRKIIGRVFVEVFDEEAFRLEDVKWLAQGTIYPDVIESAASATGKAHVIKSHHNVGGLPKEMKMGLVEPLKELFKDEVRKIGLELGLPYDMLYRHPFPGPGLGVRVLGEVKKEYCDLLRRADAIFIEELHKADLYNKVSQAFTVFLPVRSVGVMGDGRKYDWVVSLRAVETIDFMTAHWAHLPYDFLGRVSNRIINEVNGISRVVYDISGKPPATIEWE</sequence>
<gene>
    <name evidence="1" type="primary">guaA</name>
    <name type="ordered locus">CKO_00280</name>
</gene>
<protein>
    <recommendedName>
        <fullName evidence="1">GMP synthase [glutamine-hydrolyzing]</fullName>
        <ecNumber evidence="1">6.3.5.2</ecNumber>
    </recommendedName>
    <alternativeName>
        <fullName evidence="1">GMP synthetase</fullName>
    </alternativeName>
    <alternativeName>
        <fullName evidence="1">Glutamine amidotransferase</fullName>
    </alternativeName>
</protein>
<name>GUAA_CITK8</name>
<accession>A8AD80</accession>
<keyword id="KW-0067">ATP-binding</keyword>
<keyword id="KW-0315">Glutamine amidotransferase</keyword>
<keyword id="KW-0332">GMP biosynthesis</keyword>
<keyword id="KW-0436">Ligase</keyword>
<keyword id="KW-0547">Nucleotide-binding</keyword>
<keyword id="KW-0658">Purine biosynthesis</keyword>
<keyword id="KW-1185">Reference proteome</keyword>
<dbReference type="EC" id="6.3.5.2" evidence="1"/>
<dbReference type="EMBL" id="CP000822">
    <property type="protein sequence ID" value="ABV11443.1"/>
    <property type="molecule type" value="Genomic_DNA"/>
</dbReference>
<dbReference type="RefSeq" id="WP_012131274.1">
    <property type="nucleotide sequence ID" value="NC_009792.1"/>
</dbReference>
<dbReference type="SMR" id="A8AD80"/>
<dbReference type="STRING" id="290338.CKO_00280"/>
<dbReference type="MEROPS" id="C26.957"/>
<dbReference type="GeneID" id="45134558"/>
<dbReference type="KEGG" id="cko:CKO_00280"/>
<dbReference type="HOGENOM" id="CLU_014340_0_5_6"/>
<dbReference type="OrthoDB" id="9802219at2"/>
<dbReference type="UniPathway" id="UPA00189">
    <property type="reaction ID" value="UER00296"/>
</dbReference>
<dbReference type="Proteomes" id="UP000008148">
    <property type="component" value="Chromosome"/>
</dbReference>
<dbReference type="GO" id="GO:0005829">
    <property type="term" value="C:cytosol"/>
    <property type="evidence" value="ECO:0007669"/>
    <property type="project" value="TreeGrafter"/>
</dbReference>
<dbReference type="GO" id="GO:0005524">
    <property type="term" value="F:ATP binding"/>
    <property type="evidence" value="ECO:0007669"/>
    <property type="project" value="UniProtKB-UniRule"/>
</dbReference>
<dbReference type="GO" id="GO:0003921">
    <property type="term" value="F:GMP synthase activity"/>
    <property type="evidence" value="ECO:0007669"/>
    <property type="project" value="InterPro"/>
</dbReference>
<dbReference type="CDD" id="cd01742">
    <property type="entry name" value="GATase1_GMP_Synthase"/>
    <property type="match status" value="1"/>
</dbReference>
<dbReference type="CDD" id="cd01997">
    <property type="entry name" value="GMP_synthase_C"/>
    <property type="match status" value="1"/>
</dbReference>
<dbReference type="FunFam" id="3.30.300.10:FF:000002">
    <property type="entry name" value="GMP synthase [glutamine-hydrolyzing]"/>
    <property type="match status" value="1"/>
</dbReference>
<dbReference type="FunFam" id="3.40.50.620:FF:000001">
    <property type="entry name" value="GMP synthase [glutamine-hydrolyzing]"/>
    <property type="match status" value="1"/>
</dbReference>
<dbReference type="FunFam" id="3.40.50.880:FF:000001">
    <property type="entry name" value="GMP synthase [glutamine-hydrolyzing]"/>
    <property type="match status" value="1"/>
</dbReference>
<dbReference type="Gene3D" id="3.30.300.10">
    <property type="match status" value="1"/>
</dbReference>
<dbReference type="Gene3D" id="3.40.50.880">
    <property type="match status" value="1"/>
</dbReference>
<dbReference type="Gene3D" id="3.40.50.620">
    <property type="entry name" value="HUPs"/>
    <property type="match status" value="1"/>
</dbReference>
<dbReference type="HAMAP" id="MF_00344">
    <property type="entry name" value="GMP_synthase"/>
    <property type="match status" value="1"/>
</dbReference>
<dbReference type="InterPro" id="IPR029062">
    <property type="entry name" value="Class_I_gatase-like"/>
</dbReference>
<dbReference type="InterPro" id="IPR017926">
    <property type="entry name" value="GATASE"/>
</dbReference>
<dbReference type="InterPro" id="IPR001674">
    <property type="entry name" value="GMP_synth_C"/>
</dbReference>
<dbReference type="InterPro" id="IPR004739">
    <property type="entry name" value="GMP_synth_GATase"/>
</dbReference>
<dbReference type="InterPro" id="IPR022955">
    <property type="entry name" value="GMP_synthase"/>
</dbReference>
<dbReference type="InterPro" id="IPR025777">
    <property type="entry name" value="GMPS_ATP_PPase_dom"/>
</dbReference>
<dbReference type="InterPro" id="IPR022310">
    <property type="entry name" value="NAD/GMP_synthase"/>
</dbReference>
<dbReference type="InterPro" id="IPR014729">
    <property type="entry name" value="Rossmann-like_a/b/a_fold"/>
</dbReference>
<dbReference type="NCBIfam" id="TIGR00884">
    <property type="entry name" value="guaA_Cterm"/>
    <property type="match status" value="1"/>
</dbReference>
<dbReference type="NCBIfam" id="TIGR00888">
    <property type="entry name" value="guaA_Nterm"/>
    <property type="match status" value="1"/>
</dbReference>
<dbReference type="NCBIfam" id="NF000848">
    <property type="entry name" value="PRK00074.1"/>
    <property type="match status" value="1"/>
</dbReference>
<dbReference type="PANTHER" id="PTHR11922:SF2">
    <property type="entry name" value="GMP SYNTHASE [GLUTAMINE-HYDROLYZING]"/>
    <property type="match status" value="1"/>
</dbReference>
<dbReference type="PANTHER" id="PTHR11922">
    <property type="entry name" value="GMP SYNTHASE-RELATED"/>
    <property type="match status" value="1"/>
</dbReference>
<dbReference type="Pfam" id="PF00117">
    <property type="entry name" value="GATase"/>
    <property type="match status" value="1"/>
</dbReference>
<dbReference type="Pfam" id="PF00958">
    <property type="entry name" value="GMP_synt_C"/>
    <property type="match status" value="1"/>
</dbReference>
<dbReference type="Pfam" id="PF02540">
    <property type="entry name" value="NAD_synthase"/>
    <property type="match status" value="1"/>
</dbReference>
<dbReference type="PRINTS" id="PR00097">
    <property type="entry name" value="ANTSNTHASEII"/>
</dbReference>
<dbReference type="PRINTS" id="PR00099">
    <property type="entry name" value="CPSGATASE"/>
</dbReference>
<dbReference type="PRINTS" id="PR00096">
    <property type="entry name" value="GATASE"/>
</dbReference>
<dbReference type="SUPFAM" id="SSF52402">
    <property type="entry name" value="Adenine nucleotide alpha hydrolases-like"/>
    <property type="match status" value="1"/>
</dbReference>
<dbReference type="SUPFAM" id="SSF52317">
    <property type="entry name" value="Class I glutamine amidotransferase-like"/>
    <property type="match status" value="1"/>
</dbReference>
<dbReference type="SUPFAM" id="SSF54810">
    <property type="entry name" value="GMP synthetase C-terminal dimerisation domain"/>
    <property type="match status" value="1"/>
</dbReference>
<dbReference type="PROSITE" id="PS51273">
    <property type="entry name" value="GATASE_TYPE_1"/>
    <property type="match status" value="1"/>
</dbReference>
<dbReference type="PROSITE" id="PS51553">
    <property type="entry name" value="GMPS_ATP_PPASE"/>
    <property type="match status" value="1"/>
</dbReference>
<comment type="function">
    <text evidence="1">Catalyzes the synthesis of GMP from XMP.</text>
</comment>
<comment type="catalytic activity">
    <reaction evidence="1">
        <text>XMP + L-glutamine + ATP + H2O = GMP + L-glutamate + AMP + diphosphate + 2 H(+)</text>
        <dbReference type="Rhea" id="RHEA:11680"/>
        <dbReference type="ChEBI" id="CHEBI:15377"/>
        <dbReference type="ChEBI" id="CHEBI:15378"/>
        <dbReference type="ChEBI" id="CHEBI:29985"/>
        <dbReference type="ChEBI" id="CHEBI:30616"/>
        <dbReference type="ChEBI" id="CHEBI:33019"/>
        <dbReference type="ChEBI" id="CHEBI:57464"/>
        <dbReference type="ChEBI" id="CHEBI:58115"/>
        <dbReference type="ChEBI" id="CHEBI:58359"/>
        <dbReference type="ChEBI" id="CHEBI:456215"/>
        <dbReference type="EC" id="6.3.5.2"/>
    </reaction>
</comment>
<comment type="pathway">
    <text evidence="1">Purine metabolism; GMP biosynthesis; GMP from XMP (L-Gln route): step 1/1.</text>
</comment>
<comment type="subunit">
    <text evidence="1">Homodimer.</text>
</comment>
<feature type="chain" id="PRO_1000120256" description="GMP synthase [glutamine-hydrolyzing]">
    <location>
        <begin position="1"/>
        <end position="525"/>
    </location>
</feature>
<feature type="domain" description="Glutamine amidotransferase type-1" evidence="1">
    <location>
        <begin position="9"/>
        <end position="207"/>
    </location>
</feature>
<feature type="domain" description="GMPS ATP-PPase" evidence="1">
    <location>
        <begin position="208"/>
        <end position="400"/>
    </location>
</feature>
<feature type="active site" description="Nucleophile" evidence="1">
    <location>
        <position position="86"/>
    </location>
</feature>
<feature type="active site" evidence="1">
    <location>
        <position position="181"/>
    </location>
</feature>
<feature type="active site" evidence="1">
    <location>
        <position position="183"/>
    </location>
</feature>
<feature type="binding site" evidence="1">
    <location>
        <begin position="235"/>
        <end position="241"/>
    </location>
    <ligand>
        <name>ATP</name>
        <dbReference type="ChEBI" id="CHEBI:30616"/>
    </ligand>
</feature>
<evidence type="ECO:0000255" key="1">
    <source>
        <dbReference type="HAMAP-Rule" id="MF_00344"/>
    </source>
</evidence>
<organism>
    <name type="scientific">Citrobacter koseri (strain ATCC BAA-895 / CDC 4225-83 / SGSC4696)</name>
    <dbReference type="NCBI Taxonomy" id="290338"/>
    <lineage>
        <taxon>Bacteria</taxon>
        <taxon>Pseudomonadati</taxon>
        <taxon>Pseudomonadota</taxon>
        <taxon>Gammaproteobacteria</taxon>
        <taxon>Enterobacterales</taxon>
        <taxon>Enterobacteriaceae</taxon>
        <taxon>Citrobacter</taxon>
    </lineage>
</organism>
<reference key="1">
    <citation type="submission" date="2007-08" db="EMBL/GenBank/DDBJ databases">
        <authorList>
            <consortium name="The Citrobacter koseri Genome Sequencing Project"/>
            <person name="McClelland M."/>
            <person name="Sanderson E.K."/>
            <person name="Porwollik S."/>
            <person name="Spieth J."/>
            <person name="Clifton W.S."/>
            <person name="Latreille P."/>
            <person name="Courtney L."/>
            <person name="Wang C."/>
            <person name="Pepin K."/>
            <person name="Bhonagiri V."/>
            <person name="Nash W."/>
            <person name="Johnson M."/>
            <person name="Thiruvilangam P."/>
            <person name="Wilson R."/>
        </authorList>
    </citation>
    <scope>NUCLEOTIDE SEQUENCE [LARGE SCALE GENOMIC DNA]</scope>
    <source>
        <strain>ATCC BAA-895 / CDC 4225-83 / SGSC4696</strain>
    </source>
</reference>